<organism>
    <name type="scientific">Escherichia coli O9:H4 (strain HS)</name>
    <dbReference type="NCBI Taxonomy" id="331112"/>
    <lineage>
        <taxon>Bacteria</taxon>
        <taxon>Pseudomonadati</taxon>
        <taxon>Pseudomonadota</taxon>
        <taxon>Gammaproteobacteria</taxon>
        <taxon>Enterobacterales</taxon>
        <taxon>Enterobacteriaceae</taxon>
        <taxon>Escherichia</taxon>
    </lineage>
</organism>
<accession>A8A773</accession>
<evidence type="ECO:0000255" key="1">
    <source>
        <dbReference type="HAMAP-Rule" id="MF_01011"/>
    </source>
</evidence>
<feature type="chain" id="PRO_1000072908" description="tRNA/tmRNA (uracil-C(5))-methyltransferase">
    <location>
        <begin position="1"/>
        <end position="366"/>
    </location>
</feature>
<feature type="active site" description="Nucleophile" evidence="1">
    <location>
        <position position="324"/>
    </location>
</feature>
<feature type="active site" description="Proton acceptor" evidence="1">
    <location>
        <position position="358"/>
    </location>
</feature>
<feature type="binding site" evidence="1">
    <location>
        <position position="190"/>
    </location>
    <ligand>
        <name>S-adenosyl-L-methionine</name>
        <dbReference type="ChEBI" id="CHEBI:59789"/>
    </ligand>
</feature>
<feature type="binding site" evidence="1">
    <location>
        <position position="218"/>
    </location>
    <ligand>
        <name>S-adenosyl-L-methionine</name>
        <dbReference type="ChEBI" id="CHEBI:59789"/>
    </ligand>
</feature>
<feature type="binding site" evidence="1">
    <location>
        <position position="223"/>
    </location>
    <ligand>
        <name>S-adenosyl-L-methionine</name>
        <dbReference type="ChEBI" id="CHEBI:59789"/>
    </ligand>
</feature>
<feature type="binding site" evidence="1">
    <location>
        <position position="239"/>
    </location>
    <ligand>
        <name>S-adenosyl-L-methionine</name>
        <dbReference type="ChEBI" id="CHEBI:59789"/>
    </ligand>
</feature>
<feature type="binding site" evidence="1">
    <location>
        <position position="299"/>
    </location>
    <ligand>
        <name>S-adenosyl-L-methionine</name>
        <dbReference type="ChEBI" id="CHEBI:59789"/>
    </ligand>
</feature>
<gene>
    <name evidence="1" type="primary">trmA</name>
    <name type="ordered locus">EcHS_A4199</name>
</gene>
<name>TRMA_ECOHS</name>
<comment type="function">
    <text evidence="1">Dual-specificity methyltransferase that catalyzes the formation of 5-methyluridine at position 54 (m5U54) in all tRNAs, and that of position 341 (m5U341) in tmRNA (transfer-mRNA).</text>
</comment>
<comment type="catalytic activity">
    <reaction evidence="1">
        <text>uridine(54) in tRNA + S-adenosyl-L-methionine = 5-methyluridine(54) in tRNA + S-adenosyl-L-homocysteine + H(+)</text>
        <dbReference type="Rhea" id="RHEA:42712"/>
        <dbReference type="Rhea" id="RHEA-COMP:10167"/>
        <dbReference type="Rhea" id="RHEA-COMP:10193"/>
        <dbReference type="ChEBI" id="CHEBI:15378"/>
        <dbReference type="ChEBI" id="CHEBI:57856"/>
        <dbReference type="ChEBI" id="CHEBI:59789"/>
        <dbReference type="ChEBI" id="CHEBI:65315"/>
        <dbReference type="ChEBI" id="CHEBI:74447"/>
        <dbReference type="EC" id="2.1.1.35"/>
    </reaction>
</comment>
<comment type="catalytic activity">
    <reaction evidence="1">
        <text>uridine(341) in tmRNA + S-adenosyl-L-methionine = 5-methyluridine(341) in tmRNA + S-adenosyl-L-homocysteine + H(+)</text>
        <dbReference type="Rhea" id="RHEA:43612"/>
        <dbReference type="Rhea" id="RHEA-COMP:10630"/>
        <dbReference type="Rhea" id="RHEA-COMP:10631"/>
        <dbReference type="ChEBI" id="CHEBI:15378"/>
        <dbReference type="ChEBI" id="CHEBI:57856"/>
        <dbReference type="ChEBI" id="CHEBI:59789"/>
        <dbReference type="ChEBI" id="CHEBI:65315"/>
        <dbReference type="ChEBI" id="CHEBI:74447"/>
    </reaction>
</comment>
<comment type="similarity">
    <text evidence="1">Belongs to the class I-like SAM-binding methyltransferase superfamily. RNA M5U methyltransferase family. TrmA subfamily.</text>
</comment>
<keyword id="KW-0489">Methyltransferase</keyword>
<keyword id="KW-0949">S-adenosyl-L-methionine</keyword>
<keyword id="KW-0808">Transferase</keyword>
<keyword id="KW-0819">tRNA processing</keyword>
<protein>
    <recommendedName>
        <fullName evidence="1">tRNA/tmRNA (uracil-C(5))-methyltransferase</fullName>
        <ecNumber evidence="1">2.1.1.-</ecNumber>
        <ecNumber evidence="1">2.1.1.35</ecNumber>
    </recommendedName>
    <alternativeName>
        <fullName evidence="1">tRNA (uracil(54)-C(5))-methyltransferase</fullName>
    </alternativeName>
    <alternativeName>
        <fullName evidence="1">tRNA(m5U54)-methyltransferase</fullName>
        <shortName evidence="1">RUMT</shortName>
    </alternativeName>
    <alternativeName>
        <fullName evidence="1">tmRNA (uracil(341)-C(5))-methyltransferase</fullName>
    </alternativeName>
</protein>
<reference key="1">
    <citation type="journal article" date="2008" name="J. Bacteriol.">
        <title>The pangenome structure of Escherichia coli: comparative genomic analysis of E. coli commensal and pathogenic isolates.</title>
        <authorList>
            <person name="Rasko D.A."/>
            <person name="Rosovitz M.J."/>
            <person name="Myers G.S.A."/>
            <person name="Mongodin E.F."/>
            <person name="Fricke W.F."/>
            <person name="Gajer P."/>
            <person name="Crabtree J."/>
            <person name="Sebaihia M."/>
            <person name="Thomson N.R."/>
            <person name="Chaudhuri R."/>
            <person name="Henderson I.R."/>
            <person name="Sperandio V."/>
            <person name="Ravel J."/>
        </authorList>
    </citation>
    <scope>NUCLEOTIDE SEQUENCE [LARGE SCALE GENOMIC DNA]</scope>
    <source>
        <strain>HS</strain>
    </source>
</reference>
<dbReference type="EC" id="2.1.1.-" evidence="1"/>
<dbReference type="EC" id="2.1.1.35" evidence="1"/>
<dbReference type="EMBL" id="CP000802">
    <property type="protein sequence ID" value="ABV08377.1"/>
    <property type="molecule type" value="Genomic_DNA"/>
</dbReference>
<dbReference type="RefSeq" id="WP_000187022.1">
    <property type="nucleotide sequence ID" value="NC_009800.1"/>
</dbReference>
<dbReference type="SMR" id="A8A773"/>
<dbReference type="GeneID" id="75203203"/>
<dbReference type="KEGG" id="ecx:EcHS_A4199"/>
<dbReference type="HOGENOM" id="CLU_043022_0_0_6"/>
<dbReference type="GO" id="GO:0005829">
    <property type="term" value="C:cytosol"/>
    <property type="evidence" value="ECO:0007669"/>
    <property type="project" value="TreeGrafter"/>
</dbReference>
<dbReference type="GO" id="GO:0019843">
    <property type="term" value="F:rRNA binding"/>
    <property type="evidence" value="ECO:0007669"/>
    <property type="project" value="TreeGrafter"/>
</dbReference>
<dbReference type="GO" id="GO:0030697">
    <property type="term" value="F:tRNA (uracil(54)-C5)-methyltransferase activity, S-adenosyl methionine-dependent"/>
    <property type="evidence" value="ECO:0007669"/>
    <property type="project" value="UniProtKB-UniRule"/>
</dbReference>
<dbReference type="GO" id="GO:0000049">
    <property type="term" value="F:tRNA binding"/>
    <property type="evidence" value="ECO:0007669"/>
    <property type="project" value="TreeGrafter"/>
</dbReference>
<dbReference type="GO" id="GO:0030488">
    <property type="term" value="P:tRNA methylation"/>
    <property type="evidence" value="ECO:0007669"/>
    <property type="project" value="UniProtKB-UniRule"/>
</dbReference>
<dbReference type="CDD" id="cd02440">
    <property type="entry name" value="AdoMet_MTases"/>
    <property type="match status" value="1"/>
</dbReference>
<dbReference type="FunFam" id="2.40.50.1070:FF:000001">
    <property type="entry name" value="tRNA/tmRNA (uracil-C(5))-methyltransferase"/>
    <property type="match status" value="1"/>
</dbReference>
<dbReference type="FunFam" id="3.40.50.150:FF:000012">
    <property type="entry name" value="tRNA/tmRNA (uracil-C(5))-methyltransferase"/>
    <property type="match status" value="1"/>
</dbReference>
<dbReference type="Gene3D" id="2.40.50.1070">
    <property type="match status" value="1"/>
</dbReference>
<dbReference type="Gene3D" id="3.40.50.150">
    <property type="entry name" value="Vaccinia Virus protein VP39"/>
    <property type="match status" value="1"/>
</dbReference>
<dbReference type="HAMAP" id="MF_01011">
    <property type="entry name" value="RNA_methyltr_TrmA"/>
    <property type="match status" value="1"/>
</dbReference>
<dbReference type="InterPro" id="IPR030390">
    <property type="entry name" value="MeTrfase_TrmA_AS"/>
</dbReference>
<dbReference type="InterPro" id="IPR030391">
    <property type="entry name" value="MeTrfase_TrmA_CS"/>
</dbReference>
<dbReference type="InterPro" id="IPR029063">
    <property type="entry name" value="SAM-dependent_MTases_sf"/>
</dbReference>
<dbReference type="InterPro" id="IPR011869">
    <property type="entry name" value="TrmA_MeTrfase"/>
</dbReference>
<dbReference type="InterPro" id="IPR010280">
    <property type="entry name" value="U5_MeTrfase_fam"/>
</dbReference>
<dbReference type="NCBIfam" id="TIGR02143">
    <property type="entry name" value="trmA_only"/>
    <property type="match status" value="1"/>
</dbReference>
<dbReference type="PANTHER" id="PTHR47790">
    <property type="entry name" value="TRNA/TMRNA (URACIL-C(5))-METHYLTRANSFERASE"/>
    <property type="match status" value="1"/>
</dbReference>
<dbReference type="PANTHER" id="PTHR47790:SF2">
    <property type="entry name" value="TRNA_TMRNA (URACIL-C(5))-METHYLTRANSFERASE"/>
    <property type="match status" value="1"/>
</dbReference>
<dbReference type="Pfam" id="PF05958">
    <property type="entry name" value="tRNA_U5-meth_tr"/>
    <property type="match status" value="1"/>
</dbReference>
<dbReference type="SUPFAM" id="SSF53335">
    <property type="entry name" value="S-adenosyl-L-methionine-dependent methyltransferases"/>
    <property type="match status" value="1"/>
</dbReference>
<dbReference type="PROSITE" id="PS51687">
    <property type="entry name" value="SAM_MT_RNA_M5U"/>
    <property type="match status" value="1"/>
</dbReference>
<dbReference type="PROSITE" id="PS01230">
    <property type="entry name" value="TRMA_1"/>
    <property type="match status" value="1"/>
</dbReference>
<dbReference type="PROSITE" id="PS01231">
    <property type="entry name" value="TRMA_2"/>
    <property type="match status" value="1"/>
</dbReference>
<sequence length="366" mass="41967">MTPEHLPTEQYEAQLAEKVVRLQSMMAPFSDLVPEVFRSPVSHYRMRAEFRIWHDGDDLYHIIFDQQTKSRIRVDSFPAASELINQLMTAMIAGVRNNPVLRHKLFQIDYLTTLSNQAVVSLLYHKKLDDEWRQEAEALRDALRAQNLNVHLIGRATKTKIELDQDYIDERLPVAGKEMIYRQVENSFTQPNAAMNIQMLEWALDVTKGSKGDLLELYCGNGNFSLALARNFDRVLATEIAKPSVAAAQYNIAANHIDNVQIIRMAAEEFTQAMNGVREFNRLQGIDLKSYQCETIFVDPPRSGLDSETEKMVQAYPRILYISCNPETLCKNLETLSQTHKVERLALFDQFPYTHHMECGVLLTAK</sequence>
<proteinExistence type="inferred from homology"/>